<protein>
    <recommendedName>
        <fullName evidence="1">Aliphatic amidase</fullName>
        <ecNumber evidence="1">3.5.1.4</ecNumber>
    </recommendedName>
    <alternativeName>
        <fullName evidence="1">Acylamide amidohydrolase</fullName>
    </alternativeName>
</protein>
<dbReference type="EC" id="3.5.1.4" evidence="1"/>
<dbReference type="EMBL" id="AP006618">
    <property type="protein sequence ID" value="BAD55601.1"/>
    <property type="molecule type" value="Genomic_DNA"/>
</dbReference>
<dbReference type="RefSeq" id="WP_011207287.1">
    <property type="nucleotide sequence ID" value="NC_006361.1"/>
</dbReference>
<dbReference type="SMR" id="Q5Z1U0"/>
<dbReference type="STRING" id="247156.NFA_7560"/>
<dbReference type="GeneID" id="61131588"/>
<dbReference type="KEGG" id="nfa:NFA_7560"/>
<dbReference type="eggNOG" id="COG0388">
    <property type="taxonomic scope" value="Bacteria"/>
</dbReference>
<dbReference type="HOGENOM" id="CLU_071797_0_0_11"/>
<dbReference type="OrthoDB" id="9811121at2"/>
<dbReference type="Proteomes" id="UP000006820">
    <property type="component" value="Chromosome"/>
</dbReference>
<dbReference type="GO" id="GO:0004040">
    <property type="term" value="F:amidase activity"/>
    <property type="evidence" value="ECO:0007669"/>
    <property type="project" value="UniProtKB-UniRule"/>
</dbReference>
<dbReference type="CDD" id="cd07565">
    <property type="entry name" value="aliphatic_amidase"/>
    <property type="match status" value="1"/>
</dbReference>
<dbReference type="Gene3D" id="3.60.110.10">
    <property type="entry name" value="Carbon-nitrogen hydrolase"/>
    <property type="match status" value="1"/>
</dbReference>
<dbReference type="HAMAP" id="MF_01242">
    <property type="entry name" value="Aliphatic_amidase"/>
    <property type="match status" value="1"/>
</dbReference>
<dbReference type="InterPro" id="IPR050345">
    <property type="entry name" value="Aliph_Amidase/BUP"/>
</dbReference>
<dbReference type="InterPro" id="IPR023719">
    <property type="entry name" value="Aliphatic_amidase"/>
</dbReference>
<dbReference type="InterPro" id="IPR003010">
    <property type="entry name" value="C-N_Hydrolase"/>
</dbReference>
<dbReference type="InterPro" id="IPR036526">
    <property type="entry name" value="C-N_Hydrolase_sf"/>
</dbReference>
<dbReference type="NCBIfam" id="NF009802">
    <property type="entry name" value="PRK13286.1"/>
    <property type="match status" value="1"/>
</dbReference>
<dbReference type="PANTHER" id="PTHR43674:SF14">
    <property type="entry name" value="ALIPHATIC AMIDASE"/>
    <property type="match status" value="1"/>
</dbReference>
<dbReference type="PANTHER" id="PTHR43674">
    <property type="entry name" value="NITRILASE C965.09-RELATED"/>
    <property type="match status" value="1"/>
</dbReference>
<dbReference type="Pfam" id="PF00795">
    <property type="entry name" value="CN_hydrolase"/>
    <property type="match status" value="1"/>
</dbReference>
<dbReference type="SUPFAM" id="SSF56317">
    <property type="entry name" value="Carbon-nitrogen hydrolase"/>
    <property type="match status" value="1"/>
</dbReference>
<dbReference type="PROSITE" id="PS50263">
    <property type="entry name" value="CN_HYDROLASE"/>
    <property type="match status" value="1"/>
</dbReference>
<reference key="1">
    <citation type="journal article" date="2004" name="Proc. Natl. Acad. Sci. U.S.A.">
        <title>The complete genomic sequence of Nocardia farcinica IFM 10152.</title>
        <authorList>
            <person name="Ishikawa J."/>
            <person name="Yamashita A."/>
            <person name="Mikami Y."/>
            <person name="Hoshino Y."/>
            <person name="Kurita H."/>
            <person name="Hotta K."/>
            <person name="Shiba T."/>
            <person name="Hattori M."/>
        </authorList>
    </citation>
    <scope>NUCLEOTIDE SEQUENCE [LARGE SCALE GENOMIC DNA]</scope>
    <source>
        <strain>IFM 10152</strain>
    </source>
</reference>
<proteinExistence type="inferred from homology"/>
<organism>
    <name type="scientific">Nocardia farcinica (strain IFM 10152)</name>
    <dbReference type="NCBI Taxonomy" id="247156"/>
    <lineage>
        <taxon>Bacteria</taxon>
        <taxon>Bacillati</taxon>
        <taxon>Actinomycetota</taxon>
        <taxon>Actinomycetes</taxon>
        <taxon>Mycobacteriales</taxon>
        <taxon>Nocardiaceae</taxon>
        <taxon>Nocardia</taxon>
    </lineage>
</organism>
<feature type="chain" id="PRO_1000067050" description="Aliphatic amidase">
    <location>
        <begin position="1"/>
        <end position="345"/>
    </location>
</feature>
<feature type="domain" description="CN hydrolase" evidence="2">
    <location>
        <begin position="13"/>
        <end position="260"/>
    </location>
</feature>
<feature type="active site" description="Proton acceptor" evidence="1">
    <location>
        <position position="59"/>
    </location>
</feature>
<feature type="active site" description="Proton donor" evidence="1">
    <location>
        <position position="134"/>
    </location>
</feature>
<feature type="active site" description="Nucleophile" evidence="1">
    <location>
        <position position="166"/>
    </location>
</feature>
<gene>
    <name evidence="1" type="primary">amiE</name>
    <name type="ordered locus">NFA_7560</name>
</gene>
<sequence>MRHGDISSSPDTVGVAVVNYKMPRLHTKAEVLDNCRRIADMLVGMKSGLPGMDLVVFPEYSTQGIMYDEQEMYDTAATVPGEETAIFSAACREAGVWGVFSITGEQHEDHPRKPPYNTLVLIDDHGEIVQKYRKILPWCPIEGWYPGDTTYVTEGPKGLKISLIVCDDGNYPEIWRDCAMKGAELIVRCQGYMYPSKDQQVLMAKAMAWANNCYVAVANAAGFDGVYSYFGHSALIGFDGRTLGETGEEEYGIQYAQLSISAIRDARAHDQSQNHLFKLLHRGYSGVHAAGDGDRGVADCPFEFYKLWVTDAQQARERVEAITRDTVGVADCRVGSLPVEQTLEA</sequence>
<accession>Q5Z1U0</accession>
<evidence type="ECO:0000255" key="1">
    <source>
        <dbReference type="HAMAP-Rule" id="MF_01242"/>
    </source>
</evidence>
<evidence type="ECO:0000255" key="2">
    <source>
        <dbReference type="PROSITE-ProRule" id="PRU00054"/>
    </source>
</evidence>
<name>AMIE_NOCFA</name>
<comment type="function">
    <text evidence="1">Catalyzes the hydrolysis of short-chain aliphatic amides to their corresponding organic acids with release of ammonia.</text>
</comment>
<comment type="function">
    <text evidence="1">Also exhibits in vitro acyl transferase activity, transferring the acyl moiety of short-chain amides to hydroxylamine to form hydroxamates.</text>
</comment>
<comment type="catalytic activity">
    <reaction evidence="1">
        <text>a monocarboxylic acid amide + H2O = a monocarboxylate + NH4(+)</text>
        <dbReference type="Rhea" id="RHEA:12020"/>
        <dbReference type="ChEBI" id="CHEBI:15377"/>
        <dbReference type="ChEBI" id="CHEBI:28938"/>
        <dbReference type="ChEBI" id="CHEBI:35757"/>
        <dbReference type="ChEBI" id="CHEBI:83628"/>
        <dbReference type="EC" id="3.5.1.4"/>
    </reaction>
</comment>
<comment type="similarity">
    <text evidence="1">Belongs to the carbon-nitrogen hydrolase superfamily. Aliphatic amidase family.</text>
</comment>
<keyword id="KW-0378">Hydrolase</keyword>
<keyword id="KW-1185">Reference proteome</keyword>